<reference evidence="7" key="1">
    <citation type="journal article" date="2007" name="J. Proteome Res.">
        <title>De novo mass spectrometry sequencing and characterization of species-specific peptides from nucleoside diphosphate kinase B for the classification of commercial fish species belonging to the family Merlucciidae.</title>
        <authorList>
            <person name="Carrera M."/>
            <person name="Canas B."/>
            <person name="Pineiro C."/>
            <person name="Vazquez J."/>
            <person name="Gallardo J.M."/>
        </authorList>
    </citation>
    <scope>PROTEIN SEQUENCE</scope>
    <source>
        <tissue evidence="5">White muscle</tissue>
    </source>
</reference>
<feature type="chain" id="PRO_0000306187" description="Nucleoside diphosphate kinase B">
    <location>
        <begin position="1" status="less than"/>
        <end position="126"/>
    </location>
</feature>
<feature type="active site" description="Pros-phosphohistidine intermediate" evidence="1 4">
    <location>
        <position position="92"/>
    </location>
</feature>
<feature type="binding site" evidence="1">
    <location>
        <position position="6"/>
    </location>
    <ligand>
        <name>ATP</name>
        <dbReference type="ChEBI" id="CHEBI:30616"/>
    </ligand>
</feature>
<feature type="binding site" evidence="1">
    <location>
        <position position="37"/>
    </location>
    <ligand>
        <name>ATP</name>
        <dbReference type="ChEBI" id="CHEBI:30616"/>
    </ligand>
</feature>
<feature type="binding site" evidence="1">
    <location>
        <position position="68"/>
    </location>
    <ligand>
        <name>ATP</name>
        <dbReference type="ChEBI" id="CHEBI:30616"/>
    </ligand>
</feature>
<feature type="binding site" evidence="1">
    <location>
        <position position="79"/>
    </location>
    <ligand>
        <name>ATP</name>
        <dbReference type="ChEBI" id="CHEBI:30616"/>
    </ligand>
</feature>
<feature type="binding site" evidence="1">
    <location>
        <position position="89"/>
    </location>
    <ligand>
        <name>ATP</name>
        <dbReference type="ChEBI" id="CHEBI:30616"/>
    </ligand>
</feature>
<feature type="non-consecutive residues" evidence="6">
    <location>
        <begin position="20"/>
        <end position="21"/>
    </location>
</feature>
<feature type="non-consecutive residues" evidence="6">
    <location>
        <begin position="24"/>
        <end position="25"/>
    </location>
</feature>
<feature type="non-consecutive residues" evidence="6">
    <location>
        <begin position="62"/>
        <end position="63"/>
    </location>
</feature>
<feature type="non-terminal residue" evidence="6">
    <location>
        <position position="1"/>
    </location>
</feature>
<dbReference type="EC" id="2.7.4.6"/>
<dbReference type="SMR" id="P85281"/>
<dbReference type="BRENDA" id="2.7.4.6">
    <property type="organism ID" value="10448"/>
</dbReference>
<dbReference type="GO" id="GO:0005737">
    <property type="term" value="C:cytoplasm"/>
    <property type="evidence" value="ECO:0007669"/>
    <property type="project" value="UniProtKB-SubCell"/>
</dbReference>
<dbReference type="GO" id="GO:0030027">
    <property type="term" value="C:lamellipodium"/>
    <property type="evidence" value="ECO:0007669"/>
    <property type="project" value="UniProtKB-SubCell"/>
</dbReference>
<dbReference type="GO" id="GO:0005634">
    <property type="term" value="C:nucleus"/>
    <property type="evidence" value="ECO:0007669"/>
    <property type="project" value="UniProtKB-SubCell"/>
</dbReference>
<dbReference type="GO" id="GO:0001726">
    <property type="term" value="C:ruffle"/>
    <property type="evidence" value="ECO:0007669"/>
    <property type="project" value="UniProtKB-SubCell"/>
</dbReference>
<dbReference type="GO" id="GO:0005524">
    <property type="term" value="F:ATP binding"/>
    <property type="evidence" value="ECO:0007669"/>
    <property type="project" value="UniProtKB-KW"/>
</dbReference>
<dbReference type="GO" id="GO:0046872">
    <property type="term" value="F:metal ion binding"/>
    <property type="evidence" value="ECO:0007669"/>
    <property type="project" value="UniProtKB-KW"/>
</dbReference>
<dbReference type="GO" id="GO:0004550">
    <property type="term" value="F:nucleoside diphosphate kinase activity"/>
    <property type="evidence" value="ECO:0007669"/>
    <property type="project" value="UniProtKB-EC"/>
</dbReference>
<dbReference type="GO" id="GO:0006241">
    <property type="term" value="P:CTP biosynthetic process"/>
    <property type="evidence" value="ECO:0007669"/>
    <property type="project" value="InterPro"/>
</dbReference>
<dbReference type="GO" id="GO:0006183">
    <property type="term" value="P:GTP biosynthetic process"/>
    <property type="evidence" value="ECO:0007669"/>
    <property type="project" value="InterPro"/>
</dbReference>
<dbReference type="GO" id="GO:0006228">
    <property type="term" value="P:UTP biosynthetic process"/>
    <property type="evidence" value="ECO:0007669"/>
    <property type="project" value="InterPro"/>
</dbReference>
<dbReference type="CDD" id="cd04413">
    <property type="entry name" value="NDPk_I"/>
    <property type="match status" value="1"/>
</dbReference>
<dbReference type="FunFam" id="3.30.70.141:FF:000039">
    <property type="entry name" value="Nucleoside diphosphate kinase B"/>
    <property type="match status" value="1"/>
</dbReference>
<dbReference type="Gene3D" id="3.30.70.141">
    <property type="entry name" value="Nucleoside diphosphate kinase-like domain"/>
    <property type="match status" value="1"/>
</dbReference>
<dbReference type="InterPro" id="IPR034907">
    <property type="entry name" value="NDK-like_dom"/>
</dbReference>
<dbReference type="InterPro" id="IPR036850">
    <property type="entry name" value="NDK-like_dom_sf"/>
</dbReference>
<dbReference type="InterPro" id="IPR001564">
    <property type="entry name" value="Nucleoside_diP_kinase"/>
</dbReference>
<dbReference type="PANTHER" id="PTHR11349">
    <property type="entry name" value="NUCLEOSIDE DIPHOSPHATE KINASE"/>
    <property type="match status" value="1"/>
</dbReference>
<dbReference type="Pfam" id="PF00334">
    <property type="entry name" value="NDK"/>
    <property type="match status" value="1"/>
</dbReference>
<dbReference type="PRINTS" id="PR01243">
    <property type="entry name" value="NUCDPKINASE"/>
</dbReference>
<dbReference type="SMART" id="SM00562">
    <property type="entry name" value="NDK"/>
    <property type="match status" value="1"/>
</dbReference>
<dbReference type="SUPFAM" id="SSF54919">
    <property type="entry name" value="Nucleoside diphosphate kinase, NDK"/>
    <property type="match status" value="1"/>
</dbReference>
<dbReference type="PROSITE" id="PS51374">
    <property type="entry name" value="NDPK_LIKE"/>
    <property type="match status" value="1"/>
</dbReference>
<name>NDKB_MERCP</name>
<sequence length="126" mass="14207">TFVAIKPDGVQRGLCGEVMKFIQPMKQHYLDLKDMPFYAGLCKYMSSGPVFAMVWEGEGIVKMMLGETNPADSKPGSIRGDFCINIGRNIIHGSDTVENAKMEVALWFKPEEFVTYTEKAKAWVYE</sequence>
<keyword id="KW-0067">ATP-binding</keyword>
<keyword id="KW-0131">Cell cycle</keyword>
<keyword id="KW-0966">Cell projection</keyword>
<keyword id="KW-0963">Cytoplasm</keyword>
<keyword id="KW-0903">Direct protein sequencing</keyword>
<keyword id="KW-0418">Kinase</keyword>
<keyword id="KW-0460">Magnesium</keyword>
<keyword id="KW-0479">Metal-binding</keyword>
<keyword id="KW-0546">Nucleotide metabolism</keyword>
<keyword id="KW-0547">Nucleotide-binding</keyword>
<keyword id="KW-0539">Nucleus</keyword>
<keyword id="KW-0597">Phosphoprotein</keyword>
<keyword id="KW-0808">Transferase</keyword>
<accession>P85281</accession>
<gene>
    <name type="primary">nme2</name>
</gene>
<proteinExistence type="evidence at protein level"/>
<protein>
    <recommendedName>
        <fullName>Nucleoside diphosphate kinase B</fullName>
        <shortName>NDK B</shortName>
        <shortName>NDP kinase B</shortName>
        <ecNumber>2.7.4.6</ecNumber>
    </recommendedName>
</protein>
<evidence type="ECO:0000250" key="1">
    <source>
        <dbReference type="UniProtKB" id="P15531"/>
    </source>
</evidence>
<evidence type="ECO:0000250" key="2">
    <source>
        <dbReference type="UniProtKB" id="P22392"/>
    </source>
</evidence>
<evidence type="ECO:0000255" key="3"/>
<evidence type="ECO:0000255" key="4">
    <source>
        <dbReference type="PROSITE-ProRule" id="PRU10030"/>
    </source>
</evidence>
<evidence type="ECO:0000269" key="5">
    <source>
    </source>
</evidence>
<evidence type="ECO:0000303" key="6">
    <source>
    </source>
</evidence>
<evidence type="ECO:0000305" key="7"/>
<comment type="function">
    <text evidence="1">Major role in the synthesis of nucleoside triphosphates other than ATP.</text>
</comment>
<comment type="catalytic activity">
    <reaction evidence="1 4">
        <text>a 2'-deoxyribonucleoside 5'-diphosphate + ATP = a 2'-deoxyribonucleoside 5'-triphosphate + ADP</text>
        <dbReference type="Rhea" id="RHEA:44640"/>
        <dbReference type="ChEBI" id="CHEBI:30616"/>
        <dbReference type="ChEBI" id="CHEBI:61560"/>
        <dbReference type="ChEBI" id="CHEBI:73316"/>
        <dbReference type="ChEBI" id="CHEBI:456216"/>
        <dbReference type="EC" id="2.7.4.6"/>
    </reaction>
</comment>
<comment type="catalytic activity">
    <reaction evidence="1 4">
        <text>a ribonucleoside 5'-diphosphate + ATP = a ribonucleoside 5'-triphosphate + ADP</text>
        <dbReference type="Rhea" id="RHEA:18113"/>
        <dbReference type="ChEBI" id="CHEBI:30616"/>
        <dbReference type="ChEBI" id="CHEBI:57930"/>
        <dbReference type="ChEBI" id="CHEBI:61557"/>
        <dbReference type="ChEBI" id="CHEBI:456216"/>
        <dbReference type="EC" id="2.7.4.6"/>
    </reaction>
</comment>
<comment type="cofactor">
    <cofactor evidence="1">
        <name>Mg(2+)</name>
        <dbReference type="ChEBI" id="CHEBI:18420"/>
    </cofactor>
</comment>
<comment type="subcellular location">
    <subcellularLocation>
        <location evidence="2">Cytoplasm</location>
    </subcellularLocation>
    <subcellularLocation>
        <location evidence="2">Nucleus</location>
    </subcellularLocation>
    <subcellularLocation>
        <location evidence="2">Cell projection</location>
        <location evidence="2">Lamellipodium</location>
    </subcellularLocation>
    <subcellularLocation>
        <location evidence="2">Cell projection</location>
        <location evidence="2">Ruffle</location>
    </subcellularLocation>
</comment>
<comment type="similarity">
    <text evidence="3">Belongs to the NDK family.</text>
</comment>
<organism>
    <name type="scientific">Merluccius capensis</name>
    <name type="common">Shallow-water Cape hake</name>
    <name type="synonym">Gadus merluccius</name>
    <dbReference type="NCBI Taxonomy" id="89947"/>
    <lineage>
        <taxon>Eukaryota</taxon>
        <taxon>Metazoa</taxon>
        <taxon>Chordata</taxon>
        <taxon>Craniata</taxon>
        <taxon>Vertebrata</taxon>
        <taxon>Euteleostomi</taxon>
        <taxon>Actinopterygii</taxon>
        <taxon>Neopterygii</taxon>
        <taxon>Teleostei</taxon>
        <taxon>Neoteleostei</taxon>
        <taxon>Acanthomorphata</taxon>
        <taxon>Zeiogadaria</taxon>
        <taxon>Gadariae</taxon>
        <taxon>Gadiformes</taxon>
        <taxon>Gadoidei</taxon>
        <taxon>Merlucciidae</taxon>
        <taxon>Merluccius</taxon>
    </lineage>
</organism>